<comment type="cofactor">
    <cofactor evidence="3">
        <name>Cu cation</name>
        <dbReference type="ChEBI" id="CHEBI:23378"/>
    </cofactor>
</comment>
<comment type="subcellular location">
    <subcellularLocation>
        <location>Cell membrane</location>
        <topology>Lipid-anchor</topology>
        <topology>GPI-anchor</topology>
    </subcellularLocation>
</comment>
<comment type="similarity">
    <text evidence="3">Belongs to the multicopper oxidase family.</text>
</comment>
<evidence type="ECO:0000250" key="1"/>
<evidence type="ECO:0000255" key="2"/>
<evidence type="ECO:0000305" key="3"/>
<accession>Q9FHN6</accession>
<feature type="signal peptide" evidence="2">
    <location>
        <begin position="1"/>
        <end position="23"/>
    </location>
</feature>
<feature type="chain" id="PRO_0000251281" description="Monocopper oxidase-like protein SKS2">
    <location>
        <begin position="24"/>
        <end position="564"/>
    </location>
</feature>
<feature type="propeptide" id="PRO_0000251282" description="Removed in mature form" evidence="2">
    <location>
        <begin position="565"/>
        <end position="592"/>
    </location>
</feature>
<feature type="binding site" description="type 2 copper site" evidence="1">
    <location>
        <position position="455"/>
    </location>
    <ligand>
        <name>Cu cation</name>
        <dbReference type="ChEBI" id="CHEBI:23378"/>
        <label>2</label>
    </ligand>
</feature>
<feature type="lipid moiety-binding region" description="GPI-anchor amidated serine" evidence="2">
    <location>
        <position position="564"/>
    </location>
</feature>
<feature type="glycosylation site" description="N-linked (GlcNAc...) asparagine" evidence="2">
    <location>
        <position position="61"/>
    </location>
</feature>
<feature type="glycosylation site" description="N-linked (GlcNAc...) asparagine" evidence="2">
    <location>
        <position position="110"/>
    </location>
</feature>
<feature type="glycosylation site" description="N-linked (GlcNAc...) asparagine" evidence="2">
    <location>
        <position position="172"/>
    </location>
</feature>
<feature type="glycosylation site" description="N-linked (GlcNAc...) asparagine" evidence="2">
    <location>
        <position position="203"/>
    </location>
</feature>
<feature type="glycosylation site" description="N-linked (GlcNAc...) asparagine" evidence="2">
    <location>
        <position position="259"/>
    </location>
</feature>
<feature type="glycosylation site" description="N-linked (GlcNAc...) asparagine" evidence="2">
    <location>
        <position position="280"/>
    </location>
</feature>
<feature type="glycosylation site" description="N-linked (GlcNAc...) asparagine" evidence="2">
    <location>
        <position position="295"/>
    </location>
</feature>
<feature type="glycosylation site" description="N-linked (GlcNAc...) asparagine" evidence="2">
    <location>
        <position position="344"/>
    </location>
</feature>
<feature type="glycosylation site" description="N-linked (GlcNAc...) asparagine" evidence="2">
    <location>
        <position position="364"/>
    </location>
</feature>
<feature type="glycosylation site" description="N-linked (GlcNAc...) asparagine" evidence="2">
    <location>
        <position position="433"/>
    </location>
</feature>
<feature type="glycosylation site" description="N-linked (GlcNAc...) asparagine" evidence="2">
    <location>
        <position position="447"/>
    </location>
</feature>
<feature type="glycosylation site" description="N-linked (GlcNAc...) asparagine" evidence="2">
    <location>
        <position position="476"/>
    </location>
</feature>
<feature type="glycosylation site" description="N-linked (GlcNAc...) asparagine" evidence="2">
    <location>
        <position position="536"/>
    </location>
</feature>
<sequence length="592" mass="66407">MAATDFFFAFVFSFALIFGFSFAGDPYVSYDFTLSYITASPLGVPQQVIAVNGKFPGPVINATTNYNVHVNVLNHLDEPLLLTWPGVQMRRNSWQDGVLGTNCPIPPNWNFTYDFQLKDQIGSYFYSPSLNFQRASGGFGALIINNRDLVPIPFTEPDGEIIFIIGDWYTQNHTALRRILDSGKELGMPDGVLINGKGPFKYNSSVPDGIEHETVNVDPGKTYRIRVHNVGISTSLNFRIQNHKLLLIETEGRYTSQMNFTDFDVHVGQSYSFLVTMDQNATSDYYIVASARFVNETVWQRVTGVGILHYSNSKGPASGPLPVSATDVNHPWSAMNQPRAIKQNTSASGARPNPQGSFHYGQINITRTYILRSLPPTKINGKLRATLNGISFVNPSTPMRLADDHKVKGDYMLDFPDRPLDEKLPRLSSSIINATYKGFIQVIFQNNDTKIQSFHIDGYAFYVVAMDFGIWSEDRNSSYNNWDAVARSTVEVYPGAWTAVLISLDNVGVWNIRVENLDRWYLGQETYMRIINPEENGSTEMDPPENVMYCGALQAMQKEQHHSSATKSMTNGQLILIFSMMMVLLSSFSSFC</sequence>
<organism>
    <name type="scientific">Arabidopsis thaliana</name>
    <name type="common">Mouse-ear cress</name>
    <dbReference type="NCBI Taxonomy" id="3702"/>
    <lineage>
        <taxon>Eukaryota</taxon>
        <taxon>Viridiplantae</taxon>
        <taxon>Streptophyta</taxon>
        <taxon>Embryophyta</taxon>
        <taxon>Tracheophyta</taxon>
        <taxon>Spermatophyta</taxon>
        <taxon>Magnoliopsida</taxon>
        <taxon>eudicotyledons</taxon>
        <taxon>Gunneridae</taxon>
        <taxon>Pentapetalae</taxon>
        <taxon>rosids</taxon>
        <taxon>malvids</taxon>
        <taxon>Brassicales</taxon>
        <taxon>Brassicaceae</taxon>
        <taxon>Camelineae</taxon>
        <taxon>Arabidopsis</taxon>
    </lineage>
</organism>
<name>SKS2_ARATH</name>
<keyword id="KW-1003">Cell membrane</keyword>
<keyword id="KW-0186">Copper</keyword>
<keyword id="KW-0325">Glycoprotein</keyword>
<keyword id="KW-0336">GPI-anchor</keyword>
<keyword id="KW-0449">Lipoprotein</keyword>
<keyword id="KW-0472">Membrane</keyword>
<keyword id="KW-0479">Metal-binding</keyword>
<keyword id="KW-1185">Reference proteome</keyword>
<keyword id="KW-0732">Signal</keyword>
<proteinExistence type="evidence at transcript level"/>
<dbReference type="EMBL" id="AB018109">
    <property type="protein sequence ID" value="BAB08664.1"/>
    <property type="molecule type" value="Genomic_DNA"/>
</dbReference>
<dbReference type="EMBL" id="CP002688">
    <property type="protein sequence ID" value="AED96089.1"/>
    <property type="molecule type" value="Genomic_DNA"/>
</dbReference>
<dbReference type="EMBL" id="BT004990">
    <property type="protein sequence ID" value="AAO50523.1"/>
    <property type="molecule type" value="mRNA"/>
</dbReference>
<dbReference type="EMBL" id="BT004129">
    <property type="protein sequence ID" value="AAO42151.1"/>
    <property type="molecule type" value="mRNA"/>
</dbReference>
<dbReference type="RefSeq" id="NP_199961.1">
    <property type="nucleotide sequence ID" value="NM_124527.5"/>
</dbReference>
<dbReference type="SMR" id="Q9FHN6"/>
<dbReference type="BioGRID" id="20467">
    <property type="interactions" value="1"/>
</dbReference>
<dbReference type="FunCoup" id="Q9FHN6">
    <property type="interactions" value="47"/>
</dbReference>
<dbReference type="IntAct" id="Q9FHN6">
    <property type="interactions" value="2"/>
</dbReference>
<dbReference type="MINT" id="Q9FHN6"/>
<dbReference type="STRING" id="3702.Q9FHN6"/>
<dbReference type="GlyCosmos" id="Q9FHN6">
    <property type="glycosylation" value="13 sites, No reported glycans"/>
</dbReference>
<dbReference type="GlyGen" id="Q9FHN6">
    <property type="glycosylation" value="13 sites"/>
</dbReference>
<dbReference type="iPTMnet" id="Q9FHN6"/>
<dbReference type="PaxDb" id="3702-AT5G51480.1"/>
<dbReference type="ProteomicsDB" id="232636"/>
<dbReference type="EnsemblPlants" id="AT5G51480.1">
    <property type="protein sequence ID" value="AT5G51480.1"/>
    <property type="gene ID" value="AT5G51480"/>
</dbReference>
<dbReference type="GeneID" id="835222"/>
<dbReference type="Gramene" id="AT5G51480.1">
    <property type="protein sequence ID" value="AT5G51480.1"/>
    <property type="gene ID" value="AT5G51480"/>
</dbReference>
<dbReference type="KEGG" id="ath:AT5G51480"/>
<dbReference type="Araport" id="AT5G51480"/>
<dbReference type="TAIR" id="AT5G51480">
    <property type="gene designation" value="SKS2"/>
</dbReference>
<dbReference type="eggNOG" id="KOG1263">
    <property type="taxonomic scope" value="Eukaryota"/>
</dbReference>
<dbReference type="HOGENOM" id="CLU_022744_2_1_1"/>
<dbReference type="InParanoid" id="Q9FHN6"/>
<dbReference type="OMA" id="ITWPGIQ"/>
<dbReference type="PhylomeDB" id="Q9FHN6"/>
<dbReference type="CD-CODE" id="4299E36E">
    <property type="entry name" value="Nucleolus"/>
</dbReference>
<dbReference type="PRO" id="PR:Q9FHN6"/>
<dbReference type="Proteomes" id="UP000006548">
    <property type="component" value="Chromosome 5"/>
</dbReference>
<dbReference type="ExpressionAtlas" id="Q9FHN6">
    <property type="expression patterns" value="baseline and differential"/>
</dbReference>
<dbReference type="GO" id="GO:0005886">
    <property type="term" value="C:plasma membrane"/>
    <property type="evidence" value="ECO:0007005"/>
    <property type="project" value="TAIR"/>
</dbReference>
<dbReference type="GO" id="GO:0009506">
    <property type="term" value="C:plasmodesma"/>
    <property type="evidence" value="ECO:0007005"/>
    <property type="project" value="TAIR"/>
</dbReference>
<dbReference type="GO" id="GO:0098552">
    <property type="term" value="C:side of membrane"/>
    <property type="evidence" value="ECO:0007669"/>
    <property type="project" value="UniProtKB-KW"/>
</dbReference>
<dbReference type="GO" id="GO:0005507">
    <property type="term" value="F:copper ion binding"/>
    <property type="evidence" value="ECO:0007669"/>
    <property type="project" value="InterPro"/>
</dbReference>
<dbReference type="GO" id="GO:0016491">
    <property type="term" value="F:oxidoreductase activity"/>
    <property type="evidence" value="ECO:0007669"/>
    <property type="project" value="InterPro"/>
</dbReference>
<dbReference type="CDD" id="cd13846">
    <property type="entry name" value="CuRO_1_AAO_like_1"/>
    <property type="match status" value="1"/>
</dbReference>
<dbReference type="FunFam" id="2.60.40.420:FF:000012">
    <property type="entry name" value="Monocopper oxidase-like protein"/>
    <property type="match status" value="1"/>
</dbReference>
<dbReference type="FunFam" id="2.60.40.420:FF:000016">
    <property type="entry name" value="Monocopper oxidase-like protein"/>
    <property type="match status" value="1"/>
</dbReference>
<dbReference type="FunFam" id="2.60.40.420:FF:000023">
    <property type="entry name" value="Monocopper oxidase-like protein SKU5"/>
    <property type="match status" value="1"/>
</dbReference>
<dbReference type="Gene3D" id="2.60.40.420">
    <property type="entry name" value="Cupredoxins - blue copper proteins"/>
    <property type="match status" value="3"/>
</dbReference>
<dbReference type="InterPro" id="IPR011707">
    <property type="entry name" value="Cu-oxidase-like_N"/>
</dbReference>
<dbReference type="InterPro" id="IPR001117">
    <property type="entry name" value="Cu-oxidase_2nd"/>
</dbReference>
<dbReference type="InterPro" id="IPR011706">
    <property type="entry name" value="Cu-oxidase_C"/>
</dbReference>
<dbReference type="InterPro" id="IPR045087">
    <property type="entry name" value="Cu-oxidase_fam"/>
</dbReference>
<dbReference type="InterPro" id="IPR008972">
    <property type="entry name" value="Cupredoxin"/>
</dbReference>
<dbReference type="InterPro" id="IPR034273">
    <property type="entry name" value="CuRO_1_AAO-like"/>
</dbReference>
<dbReference type="PANTHER" id="PTHR11709:SF505">
    <property type="entry name" value="MONOCOPPER OXIDASE-LIKE PROTEIN SKS2"/>
    <property type="match status" value="1"/>
</dbReference>
<dbReference type="PANTHER" id="PTHR11709">
    <property type="entry name" value="MULTI-COPPER OXIDASE"/>
    <property type="match status" value="1"/>
</dbReference>
<dbReference type="Pfam" id="PF00394">
    <property type="entry name" value="Cu-oxidase"/>
    <property type="match status" value="1"/>
</dbReference>
<dbReference type="Pfam" id="PF07731">
    <property type="entry name" value="Cu-oxidase_2"/>
    <property type="match status" value="1"/>
</dbReference>
<dbReference type="Pfam" id="PF07732">
    <property type="entry name" value="Cu-oxidase_3"/>
    <property type="match status" value="1"/>
</dbReference>
<dbReference type="SUPFAM" id="SSF49503">
    <property type="entry name" value="Cupredoxins"/>
    <property type="match status" value="3"/>
</dbReference>
<gene>
    <name type="primary">SKS2</name>
    <name type="ordered locus">At5g51480</name>
    <name type="ORF">K17N15.3</name>
</gene>
<protein>
    <recommendedName>
        <fullName>Monocopper oxidase-like protein SKS2</fullName>
    </recommendedName>
</protein>
<reference key="1">
    <citation type="journal article" date="2000" name="DNA Res.">
        <title>Structural analysis of Arabidopsis thaliana chromosome 5. X. Sequence features of the regions of 3,076,755 bp covered by sixty P1 and TAC clones.</title>
        <authorList>
            <person name="Sato S."/>
            <person name="Nakamura Y."/>
            <person name="Kaneko T."/>
            <person name="Katoh T."/>
            <person name="Asamizu E."/>
            <person name="Kotani H."/>
            <person name="Tabata S."/>
        </authorList>
    </citation>
    <scope>NUCLEOTIDE SEQUENCE [LARGE SCALE GENOMIC DNA]</scope>
    <source>
        <strain>cv. Columbia</strain>
    </source>
</reference>
<reference key="2">
    <citation type="journal article" date="2017" name="Plant J.">
        <title>Araport11: a complete reannotation of the Arabidopsis thaliana reference genome.</title>
        <authorList>
            <person name="Cheng C.Y."/>
            <person name="Krishnakumar V."/>
            <person name="Chan A.P."/>
            <person name="Thibaud-Nissen F."/>
            <person name="Schobel S."/>
            <person name="Town C.D."/>
        </authorList>
    </citation>
    <scope>GENOME REANNOTATION</scope>
    <source>
        <strain>cv. Columbia</strain>
    </source>
</reference>
<reference key="3">
    <citation type="journal article" date="2003" name="Science">
        <title>Empirical analysis of transcriptional activity in the Arabidopsis genome.</title>
        <authorList>
            <person name="Yamada K."/>
            <person name="Lim J."/>
            <person name="Dale J.M."/>
            <person name="Chen H."/>
            <person name="Shinn P."/>
            <person name="Palm C.J."/>
            <person name="Southwick A.M."/>
            <person name="Wu H.C."/>
            <person name="Kim C.J."/>
            <person name="Nguyen M."/>
            <person name="Pham P.K."/>
            <person name="Cheuk R.F."/>
            <person name="Karlin-Newmann G."/>
            <person name="Liu S.X."/>
            <person name="Lam B."/>
            <person name="Sakano H."/>
            <person name="Wu T."/>
            <person name="Yu G."/>
            <person name="Miranda M."/>
            <person name="Quach H.L."/>
            <person name="Tripp M."/>
            <person name="Chang C.H."/>
            <person name="Lee J.M."/>
            <person name="Toriumi M.J."/>
            <person name="Chan M.M."/>
            <person name="Tang C.C."/>
            <person name="Onodera C.S."/>
            <person name="Deng J.M."/>
            <person name="Akiyama K."/>
            <person name="Ansari Y."/>
            <person name="Arakawa T."/>
            <person name="Banh J."/>
            <person name="Banno F."/>
            <person name="Bowser L."/>
            <person name="Brooks S.Y."/>
            <person name="Carninci P."/>
            <person name="Chao Q."/>
            <person name="Choy N."/>
            <person name="Enju A."/>
            <person name="Goldsmith A.D."/>
            <person name="Gurjal M."/>
            <person name="Hansen N.F."/>
            <person name="Hayashizaki Y."/>
            <person name="Johnson-Hopson C."/>
            <person name="Hsuan V.W."/>
            <person name="Iida K."/>
            <person name="Karnes M."/>
            <person name="Khan S."/>
            <person name="Koesema E."/>
            <person name="Ishida J."/>
            <person name="Jiang P.X."/>
            <person name="Jones T."/>
            <person name="Kawai J."/>
            <person name="Kamiya A."/>
            <person name="Meyers C."/>
            <person name="Nakajima M."/>
            <person name="Narusaka M."/>
            <person name="Seki M."/>
            <person name="Sakurai T."/>
            <person name="Satou M."/>
            <person name="Tamse R."/>
            <person name="Vaysberg M."/>
            <person name="Wallender E.K."/>
            <person name="Wong C."/>
            <person name="Yamamura Y."/>
            <person name="Yuan S."/>
            <person name="Shinozaki K."/>
            <person name="Davis R.W."/>
            <person name="Theologis A."/>
            <person name="Ecker J.R."/>
        </authorList>
    </citation>
    <scope>NUCLEOTIDE SEQUENCE [LARGE SCALE MRNA]</scope>
    <source>
        <strain>cv. Columbia</strain>
    </source>
</reference>